<gene>
    <name type="primary">Ralgps1</name>
    <name type="synonym">Kiaa0351</name>
    <name type="synonym">Ralgef2</name>
    <name type="synonym">Ralgps1a</name>
</gene>
<sequence>MYKRNGLMASVLVTSATPQGSSSSDSLEGQSCDYASKSYDAVVFDVLKVTPEEFASQITLMDIPVFKAIQPEELASCGWSKKEKHSLAPNVVAFTRRFNQVSFWVVREILTAQTLKIRAEILSHFVKIAKKLLELNNLHSLMSVVSALQSAPIFRLTKTWALLNRKDKTTFEKLDYLMSKEDNYKRTRDYIRSLKMVPSIPYLGIYLLDLIYIDSAYPASGSIMENEQRSNQMNNILRIIADLQVSCSYDHLTTLPHVQKYLKSVRYIEELQKFVEDDNYKLSLRIEPGSSSPRLVSSKEDLAGPSAGSSSARFRRRPTCPDTSVAGSLPTPPVPRHRKSHSLGNNLMCQLSVVESKSATFPSEKARHLLDDSVLESRSPRRGLTHTSSTAITNGLSLGSSESSEFSEEMSAGLESRGRLYATLGPNWRVPVRNSPRTRSCVYSPTSPCTCTVGSSATVPTMEGPLRRKTLLKEGRKPALSSWTRYWVVLSGATLLYYGAKSLRGTDRKHYKSTPGKKVSIVGWMVQLPDDPEHPDIFQLNNPDKGNVYKFQTGSRFHAILWHKHLDDACKSSRPQVPANLMSFE</sequence>
<proteinExistence type="evidence at protein level"/>
<evidence type="ECO:0000250" key="1"/>
<evidence type="ECO:0000255" key="2">
    <source>
        <dbReference type="PROSITE-ProRule" id="PRU00145"/>
    </source>
</evidence>
<evidence type="ECO:0000255" key="3">
    <source>
        <dbReference type="PROSITE-ProRule" id="PRU00168"/>
    </source>
</evidence>
<evidence type="ECO:0000256" key="4">
    <source>
        <dbReference type="SAM" id="MobiDB-lite"/>
    </source>
</evidence>
<evidence type="ECO:0000303" key="5">
    <source>
    </source>
</evidence>
<evidence type="ECO:0000303" key="6">
    <source>
    </source>
</evidence>
<evidence type="ECO:0000303" key="7">
    <source>
    </source>
</evidence>
<evidence type="ECO:0000305" key="8"/>
<evidence type="ECO:0007829" key="9">
    <source>
        <dbReference type="PDB" id="2DTC"/>
    </source>
</evidence>
<keyword id="KW-0002">3D-structure</keyword>
<keyword id="KW-0025">Alternative splicing</keyword>
<keyword id="KW-1003">Cell membrane</keyword>
<keyword id="KW-0963">Cytoplasm</keyword>
<keyword id="KW-0344">Guanine-nucleotide releasing factor</keyword>
<keyword id="KW-0472">Membrane</keyword>
<keyword id="KW-1185">Reference proteome</keyword>
<comment type="function">
    <text evidence="1">Guanine nucleotide exchange factor for the small GTPase RALA. May be involved in cytoskeleton organization.</text>
</comment>
<comment type="subunit">
    <text evidence="1">Interacts with the SH3 domains of GRB2, NCK1, PLCG1 and SRC.</text>
</comment>
<comment type="subcellular location">
    <subcellularLocation>
        <location evidence="1">Cytoplasm</location>
    </subcellularLocation>
    <subcellularLocation>
        <location evidence="1">Cell membrane</location>
    </subcellularLocation>
    <text evidence="1">Associates with membranes through the PH domain.</text>
</comment>
<comment type="alternative products">
    <event type="alternative splicing"/>
    <isoform>
        <id>A2AR50-1</id>
        <name>1</name>
        <sequence type="displayed"/>
    </isoform>
    <isoform>
        <id>A2AR50-2</id>
        <name>2</name>
        <sequence type="described" ref="VSP_033482 VSP_033485"/>
    </isoform>
    <isoform>
        <id>A2AR50-3</id>
        <name>3</name>
        <sequence type="described" ref="VSP_033486"/>
    </isoform>
    <isoform>
        <id>A2AR50-4</id>
        <name>4</name>
        <sequence type="described" ref="VSP_033483 VSP_033484"/>
    </isoform>
</comment>
<comment type="domain">
    <text evidence="1">The PH domain mediates binding to membranes. It is required for efficient GEF activity.</text>
</comment>
<comment type="sequence caution" evidence="8">
    <conflict type="erroneous termination">
        <sequence resource="EMBL-CDS" id="BAC25535"/>
    </conflict>
    <text>Truncated C-terminus.</text>
</comment>
<comment type="sequence caution" evidence="8">
    <conflict type="frameshift">
        <sequence resource="EMBL-CDS" id="BAC25535"/>
    </conflict>
</comment>
<comment type="sequence caution" evidence="8">
    <conflict type="erroneous initiation">
        <sequence resource="EMBL-CDS" id="BAC97933"/>
    </conflict>
</comment>
<comment type="sequence caution" evidence="8">
    <conflict type="erroneous gene model prediction">
        <sequence resource="EMBL-CDS" id="CAM22215"/>
    </conflict>
</comment>
<comment type="sequence caution" evidence="8">
    <conflict type="erroneous gene model prediction">
        <sequence resource="EMBL-CDS" id="CAM25545"/>
    </conflict>
</comment>
<organism>
    <name type="scientific">Mus musculus</name>
    <name type="common">Mouse</name>
    <dbReference type="NCBI Taxonomy" id="10090"/>
    <lineage>
        <taxon>Eukaryota</taxon>
        <taxon>Metazoa</taxon>
        <taxon>Chordata</taxon>
        <taxon>Craniata</taxon>
        <taxon>Vertebrata</taxon>
        <taxon>Euteleostomi</taxon>
        <taxon>Mammalia</taxon>
        <taxon>Eutheria</taxon>
        <taxon>Euarchontoglires</taxon>
        <taxon>Glires</taxon>
        <taxon>Rodentia</taxon>
        <taxon>Myomorpha</taxon>
        <taxon>Muroidea</taxon>
        <taxon>Muridae</taxon>
        <taxon>Murinae</taxon>
        <taxon>Mus</taxon>
        <taxon>Mus</taxon>
    </lineage>
</organism>
<protein>
    <recommendedName>
        <fullName>Ras-specific guanine nucleotide-releasing factor RalGPS1</fullName>
    </recommendedName>
    <alternativeName>
        <fullName>Ral GEF with PH domain and SH3-binding motif 1</fullName>
    </alternativeName>
    <alternativeName>
        <fullName>Ral guanine nucleotide exchange factor 2</fullName>
        <shortName>RalGEF 2</shortName>
    </alternativeName>
    <alternativeName>
        <fullName>RalA exchange factor RalGPS1</fullName>
    </alternativeName>
</protein>
<feature type="chain" id="PRO_0000333193" description="Ras-specific guanine nucleotide-releasing factor RalGPS1">
    <location>
        <begin position="1"/>
        <end position="585"/>
    </location>
</feature>
<feature type="domain" description="Ras-GEF" evidence="3">
    <location>
        <begin position="50"/>
        <end position="289"/>
    </location>
</feature>
<feature type="domain" description="PH" evidence="2">
    <location>
        <begin position="459"/>
        <end position="571"/>
    </location>
</feature>
<feature type="region of interest" description="Disordered" evidence="4">
    <location>
        <begin position="289"/>
        <end position="342"/>
    </location>
</feature>
<feature type="region of interest" description="Disordered" evidence="4">
    <location>
        <begin position="378"/>
        <end position="410"/>
    </location>
</feature>
<feature type="region of interest" description="Required for stimulation of nucleotide exchange by RALA" evidence="1">
    <location>
        <begin position="461"/>
        <end position="585"/>
    </location>
</feature>
<feature type="short sequence motif" description="PXXP">
    <location>
        <begin position="330"/>
        <end position="333"/>
    </location>
</feature>
<feature type="compositionally biased region" description="Low complexity" evidence="4">
    <location>
        <begin position="303"/>
        <end position="312"/>
    </location>
</feature>
<feature type="compositionally biased region" description="Polar residues" evidence="4">
    <location>
        <begin position="385"/>
        <end position="396"/>
    </location>
</feature>
<feature type="splice variant" id="VSP_033482" description="In isoform 2." evidence="5">
    <location>
        <begin position="56"/>
        <end position="72"/>
    </location>
</feature>
<feature type="splice variant" id="VSP_033483" description="In isoform 4." evidence="7">
    <original>IYLLDLIYIDSAYPASGSIMENEQRSNQMNNILRIIADL</original>
    <variation>MSLSYFIINFPGNITCSGPNKMFLQFLVEMFPGSSRDHG</variation>
    <location>
        <begin position="205"/>
        <end position="243"/>
    </location>
</feature>
<feature type="splice variant" id="VSP_033484" description="In isoform 4." evidence="7">
    <location>
        <begin position="244"/>
        <end position="585"/>
    </location>
</feature>
<feature type="splice variant" id="VSP_033485" description="In isoform 2." evidence="5">
    <original>NLMCQLSVVESKSATFPSEKARHLLDDSVLESRSPRRGLTHTSSTAITNGLSLGSSESSEFSEEMSAGLESR</original>
    <variation>K</variation>
    <location>
        <begin position="346"/>
        <end position="417"/>
    </location>
</feature>
<feature type="splice variant" id="VSP_033486" description="In isoform 3." evidence="6">
    <location>
        <begin position="347"/>
        <end position="416"/>
    </location>
</feature>
<feature type="sequence conflict" description="In Ref. 2; BAC25535." evidence="8" ref="2">
    <original>R</original>
    <variation>L</variation>
    <location>
        <position position="96"/>
    </location>
</feature>
<feature type="sequence conflict" description="In Ref. 2; BAC25535." evidence="8" ref="2">
    <original>Q</original>
    <variation>H</variation>
    <location>
        <position position="100"/>
    </location>
</feature>
<feature type="sequence conflict" description="In Ref. 2; BAC25535." evidence="8" ref="2">
    <original>E</original>
    <variation>K</variation>
    <location>
        <position position="108"/>
    </location>
</feature>
<feature type="sequence conflict" description="In Ref. 2; BAC25535." evidence="8" ref="2">
    <original>R</original>
    <variation>K</variation>
    <location>
        <position position="118"/>
    </location>
</feature>
<feature type="sequence conflict" description="In Ref. 2; BAC25535." evidence="8" ref="2">
    <original>SHFVKIAKKLLE</original>
    <variation>TPCPVKNRPNKLSNN</variation>
    <location>
        <begin position="123"/>
        <end position="134"/>
    </location>
</feature>
<feature type="sequence conflict" description="In Ref. 2; BAC25535." evidence="8" ref="2">
    <original>L</original>
    <variation>H</variation>
    <location>
        <position position="138"/>
    </location>
</feature>
<feature type="sequence conflict" description="In Ref. 2; BAC25535." evidence="8" ref="2">
    <original>SAPIFR</original>
    <variation>IATIFL</variation>
    <location>
        <begin position="150"/>
        <end position="155"/>
    </location>
</feature>
<feature type="sequence conflict" description="In Ref. 4; AAH72656." evidence="8" ref="4">
    <original>L</original>
    <variation>P</variation>
    <location>
        <position position="162"/>
    </location>
</feature>
<feature type="sequence conflict" description="In Ref. 2; BAC25535." evidence="8" ref="2">
    <original>R</original>
    <variation>L</variation>
    <location>
        <position position="165"/>
    </location>
</feature>
<feature type="sequence conflict" description="In Ref. 2; BAC25535." evidence="8" ref="2">
    <original>K</original>
    <variation>M</variation>
    <location>
        <position position="168"/>
    </location>
</feature>
<feature type="sequence conflict" description="In Ref. 2; BAC25535." evidence="8" ref="2">
    <original>L</original>
    <variation>P</variation>
    <location>
        <position position="174"/>
    </location>
</feature>
<feature type="sequence conflict" description="In Ref. 2; BAC25535." evidence="8" ref="2">
    <original>N</original>
    <variation>I</variation>
    <location>
        <position position="183"/>
    </location>
</feature>
<feature type="sequence conflict" description="In Ref. 2; BAC25535." evidence="8" ref="2">
    <original>G</original>
    <variation>C</variation>
    <location>
        <position position="204"/>
    </location>
</feature>
<feature type="strand" evidence="9">
    <location>
        <begin position="462"/>
        <end position="473"/>
    </location>
</feature>
<feature type="strand" evidence="9">
    <location>
        <begin position="484"/>
        <end position="491"/>
    </location>
</feature>
<feature type="strand" evidence="9">
    <location>
        <begin position="494"/>
        <end position="503"/>
    </location>
</feature>
<feature type="helix" evidence="9">
    <location>
        <begin position="508"/>
        <end position="510"/>
    </location>
</feature>
<feature type="strand" evidence="9">
    <location>
        <begin position="516"/>
        <end position="520"/>
    </location>
</feature>
<feature type="strand" evidence="9">
    <location>
        <begin position="525"/>
        <end position="527"/>
    </location>
</feature>
<feature type="strand" evidence="9">
    <location>
        <begin position="537"/>
        <end position="541"/>
    </location>
</feature>
<feature type="strand" evidence="9">
    <location>
        <begin position="547"/>
        <end position="552"/>
    </location>
</feature>
<feature type="helix" evidence="9">
    <location>
        <begin position="556"/>
        <end position="570"/>
    </location>
</feature>
<dbReference type="EMBL" id="AK129123">
    <property type="protein sequence ID" value="BAC97933.1"/>
    <property type="status" value="ALT_INIT"/>
    <property type="molecule type" value="mRNA"/>
</dbReference>
<dbReference type="EMBL" id="AK017939">
    <property type="protein sequence ID" value="BAC25535.1"/>
    <property type="status" value="ALT_SEQ"/>
    <property type="molecule type" value="mRNA"/>
</dbReference>
<dbReference type="EMBL" id="AK076767">
    <property type="protein sequence ID" value="BAC36473.1"/>
    <property type="molecule type" value="mRNA"/>
</dbReference>
<dbReference type="EMBL" id="AL845277">
    <property type="protein sequence ID" value="CAM22214.1"/>
    <property type="molecule type" value="Genomic_DNA"/>
</dbReference>
<dbReference type="EMBL" id="AL929197">
    <property type="protein sequence ID" value="CAM22214.1"/>
    <property type="status" value="JOINED"/>
    <property type="molecule type" value="Genomic_DNA"/>
</dbReference>
<dbReference type="EMBL" id="AL845277">
    <property type="protein sequence ID" value="CAM22215.1"/>
    <property type="status" value="ALT_SEQ"/>
    <property type="molecule type" value="Genomic_DNA"/>
</dbReference>
<dbReference type="EMBL" id="AL929197">
    <property type="protein sequence ID" value="CAM22215.1"/>
    <property type="status" value="JOINED"/>
    <property type="molecule type" value="Genomic_DNA"/>
</dbReference>
<dbReference type="EMBL" id="AL845277">
    <property type="protein sequence ID" value="CAM22216.1"/>
    <property type="molecule type" value="Genomic_DNA"/>
</dbReference>
<dbReference type="EMBL" id="AL929197">
    <property type="protein sequence ID" value="CAM22216.1"/>
    <property type="status" value="JOINED"/>
    <property type="molecule type" value="Genomic_DNA"/>
</dbReference>
<dbReference type="EMBL" id="AL845277">
    <property type="protein sequence ID" value="CAM22217.1"/>
    <property type="molecule type" value="Genomic_DNA"/>
</dbReference>
<dbReference type="EMBL" id="AL929197">
    <property type="protein sequence ID" value="CAM25544.1"/>
    <property type="molecule type" value="Genomic_DNA"/>
</dbReference>
<dbReference type="EMBL" id="AL845277">
    <property type="protein sequence ID" value="CAM25544.1"/>
    <property type="status" value="JOINED"/>
    <property type="molecule type" value="Genomic_DNA"/>
</dbReference>
<dbReference type="EMBL" id="AL929197">
    <property type="protein sequence ID" value="CAM25545.1"/>
    <property type="status" value="ALT_SEQ"/>
    <property type="molecule type" value="Genomic_DNA"/>
</dbReference>
<dbReference type="EMBL" id="AL845277">
    <property type="protein sequence ID" value="CAM25545.1"/>
    <property type="status" value="JOINED"/>
    <property type="molecule type" value="Genomic_DNA"/>
</dbReference>
<dbReference type="EMBL" id="AL929197">
    <property type="protein sequence ID" value="CAM25546.1"/>
    <property type="molecule type" value="Genomic_DNA"/>
</dbReference>
<dbReference type="EMBL" id="AL845277">
    <property type="protein sequence ID" value="CAM25546.1"/>
    <property type="status" value="JOINED"/>
    <property type="molecule type" value="Genomic_DNA"/>
</dbReference>
<dbReference type="EMBL" id="BC072656">
    <property type="protein sequence ID" value="AAH72656.1"/>
    <property type="molecule type" value="mRNA"/>
</dbReference>
<dbReference type="CCDS" id="CCDS15939.1">
    <molecule id="A2AR50-1"/>
</dbReference>
<dbReference type="CCDS" id="CCDS71031.1">
    <molecule id="A2AR50-2"/>
</dbReference>
<dbReference type="CCDS" id="CCDS79779.1">
    <molecule id="A2AR50-3"/>
</dbReference>
<dbReference type="RefSeq" id="NP_001277499.1">
    <molecule id="A2AR50-2"/>
    <property type="nucleotide sequence ID" value="NM_001290570.1"/>
</dbReference>
<dbReference type="RefSeq" id="NP_001277501.1">
    <molecule id="A2AR50-3"/>
    <property type="nucleotide sequence ID" value="NM_001290572.1"/>
</dbReference>
<dbReference type="RefSeq" id="NP_780420.1">
    <molecule id="A2AR50-1"/>
    <property type="nucleotide sequence ID" value="NM_175211.5"/>
</dbReference>
<dbReference type="RefSeq" id="XP_006498095.1">
    <molecule id="A2AR50-1"/>
    <property type="nucleotide sequence ID" value="XM_006498032.4"/>
</dbReference>
<dbReference type="RefSeq" id="XP_030106871.1">
    <molecule id="A2AR50-1"/>
    <property type="nucleotide sequence ID" value="XM_030251011.1"/>
</dbReference>
<dbReference type="RefSeq" id="XP_030106882.1">
    <molecule id="A2AR50-3"/>
    <property type="nucleotide sequence ID" value="XM_030251022.2"/>
</dbReference>
<dbReference type="PDB" id="2DTC">
    <property type="method" value="X-ray"/>
    <property type="resolution" value="1.70 A"/>
    <property type="chains" value="A/B=460-585"/>
</dbReference>
<dbReference type="PDBsum" id="2DTC"/>
<dbReference type="SMR" id="A2AR50"/>
<dbReference type="FunCoup" id="A2AR50">
    <property type="interactions" value="1594"/>
</dbReference>
<dbReference type="STRING" id="10090.ENSMUSP00000088563"/>
<dbReference type="GlyGen" id="A2AR50">
    <property type="glycosylation" value="1 site"/>
</dbReference>
<dbReference type="iPTMnet" id="A2AR50"/>
<dbReference type="PhosphoSitePlus" id="A2AR50"/>
<dbReference type="PaxDb" id="10090-ENSMUSP00000088563"/>
<dbReference type="PeptideAtlas" id="A2AR50"/>
<dbReference type="ProteomicsDB" id="254939">
    <molecule id="A2AR50-1"/>
</dbReference>
<dbReference type="ProteomicsDB" id="254940">
    <molecule id="A2AR50-2"/>
</dbReference>
<dbReference type="ProteomicsDB" id="254941">
    <molecule id="A2AR50-3"/>
</dbReference>
<dbReference type="ProteomicsDB" id="254942">
    <molecule id="A2AR50-4"/>
</dbReference>
<dbReference type="Antibodypedia" id="30625">
    <property type="antibodies" value="65 antibodies from 18 providers"/>
</dbReference>
<dbReference type="DNASU" id="241308"/>
<dbReference type="Ensembl" id="ENSMUST00000042615.13">
    <molecule id="A2AR50-2"/>
    <property type="protein sequence ID" value="ENSMUSP00000048451.7"/>
    <property type="gene ID" value="ENSMUSG00000038831.17"/>
</dbReference>
<dbReference type="Ensembl" id="ENSMUST00000091039.5">
    <molecule id="A2AR50-1"/>
    <property type="protein sequence ID" value="ENSMUSP00000088563.3"/>
    <property type="gene ID" value="ENSMUSG00000038831.17"/>
</dbReference>
<dbReference type="Ensembl" id="ENSMUST00000131298.7">
    <molecule id="A2AR50-3"/>
    <property type="protein sequence ID" value="ENSMUSP00000118363.3"/>
    <property type="gene ID" value="ENSMUSG00000038831.17"/>
</dbReference>
<dbReference type="GeneID" id="241308"/>
<dbReference type="KEGG" id="mmu:241308"/>
<dbReference type="UCSC" id="uc008jhm.2">
    <molecule id="A2AR50-1"/>
    <property type="organism name" value="mouse"/>
</dbReference>
<dbReference type="UCSC" id="uc008jhn.2">
    <molecule id="A2AR50-3"/>
    <property type="organism name" value="mouse"/>
</dbReference>
<dbReference type="UCSC" id="uc008jho.2">
    <molecule id="A2AR50-2"/>
    <property type="organism name" value="mouse"/>
</dbReference>
<dbReference type="AGR" id="MGI:1922008"/>
<dbReference type="CTD" id="9649"/>
<dbReference type="MGI" id="MGI:1922008">
    <property type="gene designation" value="Ralgps1"/>
</dbReference>
<dbReference type="VEuPathDB" id="HostDB:ENSMUSG00000038831"/>
<dbReference type="eggNOG" id="KOG3417">
    <property type="taxonomic scope" value="Eukaryota"/>
</dbReference>
<dbReference type="GeneTree" id="ENSGT00940000154079"/>
<dbReference type="HOGENOM" id="CLU_021333_0_1_1"/>
<dbReference type="InParanoid" id="A2AR50"/>
<dbReference type="OMA" id="SKEDLAX"/>
<dbReference type="OrthoDB" id="546434at2759"/>
<dbReference type="PhylomeDB" id="A2AR50"/>
<dbReference type="TreeFam" id="TF352150"/>
<dbReference type="BioGRID-ORCS" id="241308">
    <property type="hits" value="2 hits in 77 CRISPR screens"/>
</dbReference>
<dbReference type="ChiTaRS" id="Ralgps1">
    <property type="organism name" value="mouse"/>
</dbReference>
<dbReference type="EvolutionaryTrace" id="A2AR50"/>
<dbReference type="PRO" id="PR:A2AR50"/>
<dbReference type="Proteomes" id="UP000000589">
    <property type="component" value="Chromosome 2"/>
</dbReference>
<dbReference type="RNAct" id="A2AR50">
    <property type="molecule type" value="protein"/>
</dbReference>
<dbReference type="Bgee" id="ENSMUSG00000038831">
    <property type="expression patterns" value="Expressed in cortical plate and 186 other cell types or tissues"/>
</dbReference>
<dbReference type="ExpressionAtlas" id="A2AR50">
    <property type="expression patterns" value="baseline and differential"/>
</dbReference>
<dbReference type="GO" id="GO:0005737">
    <property type="term" value="C:cytoplasm"/>
    <property type="evidence" value="ECO:0007669"/>
    <property type="project" value="UniProtKB-SubCell"/>
</dbReference>
<dbReference type="GO" id="GO:0005886">
    <property type="term" value="C:plasma membrane"/>
    <property type="evidence" value="ECO:0007669"/>
    <property type="project" value="UniProtKB-SubCell"/>
</dbReference>
<dbReference type="GO" id="GO:0005085">
    <property type="term" value="F:guanyl-nucleotide exchange factor activity"/>
    <property type="evidence" value="ECO:0007669"/>
    <property type="project" value="UniProtKB-KW"/>
</dbReference>
<dbReference type="GO" id="GO:0032485">
    <property type="term" value="P:regulation of Ral protein signal transduction"/>
    <property type="evidence" value="ECO:0007669"/>
    <property type="project" value="Ensembl"/>
</dbReference>
<dbReference type="GO" id="GO:0007264">
    <property type="term" value="P:small GTPase-mediated signal transduction"/>
    <property type="evidence" value="ECO:0007669"/>
    <property type="project" value="InterPro"/>
</dbReference>
<dbReference type="CDD" id="cd13310">
    <property type="entry name" value="PH_RalGPS1_2"/>
    <property type="match status" value="1"/>
</dbReference>
<dbReference type="CDD" id="cd00155">
    <property type="entry name" value="RasGEF"/>
    <property type="match status" value="1"/>
</dbReference>
<dbReference type="FunFam" id="1.10.840.10:FF:000010">
    <property type="entry name" value="ras-specific guanine nucleotide-releasing factor RalGPS1 isoform X1"/>
    <property type="match status" value="1"/>
</dbReference>
<dbReference type="FunFam" id="2.30.29.30:FF:000152">
    <property type="entry name" value="ras-specific guanine nucleotide-releasing factor RalGPS1 isoform X1"/>
    <property type="match status" value="1"/>
</dbReference>
<dbReference type="Gene3D" id="2.30.29.30">
    <property type="entry name" value="Pleckstrin-homology domain (PH domain)/Phosphotyrosine-binding domain (PTB)"/>
    <property type="match status" value="1"/>
</dbReference>
<dbReference type="Gene3D" id="1.10.840.10">
    <property type="entry name" value="Ras guanine-nucleotide exchange factors catalytic domain"/>
    <property type="match status" value="1"/>
</dbReference>
<dbReference type="InterPro" id="IPR011993">
    <property type="entry name" value="PH-like_dom_sf"/>
</dbReference>
<dbReference type="InterPro" id="IPR001849">
    <property type="entry name" value="PH_domain"/>
</dbReference>
<dbReference type="InterPro" id="IPR008937">
    <property type="entry name" value="Ras-like_GEF"/>
</dbReference>
<dbReference type="InterPro" id="IPR023578">
    <property type="entry name" value="Ras_GEF_dom_sf"/>
</dbReference>
<dbReference type="InterPro" id="IPR001895">
    <property type="entry name" value="RASGEF_cat_dom"/>
</dbReference>
<dbReference type="InterPro" id="IPR036964">
    <property type="entry name" value="RASGEF_cat_dom_sf"/>
</dbReference>
<dbReference type="PANTHER" id="PTHR23113">
    <property type="entry name" value="GUANINE NUCLEOTIDE EXCHANGE FACTOR"/>
    <property type="match status" value="1"/>
</dbReference>
<dbReference type="PANTHER" id="PTHR23113:SF167">
    <property type="entry name" value="RAS-SPECIFIC GUANINE NUCLEOTIDE-RELEASING FACTOR RALGPS1"/>
    <property type="match status" value="1"/>
</dbReference>
<dbReference type="Pfam" id="PF00169">
    <property type="entry name" value="PH"/>
    <property type="match status" value="1"/>
</dbReference>
<dbReference type="Pfam" id="PF00617">
    <property type="entry name" value="RasGEF"/>
    <property type="match status" value="1"/>
</dbReference>
<dbReference type="SMART" id="SM00233">
    <property type="entry name" value="PH"/>
    <property type="match status" value="1"/>
</dbReference>
<dbReference type="SMART" id="SM00147">
    <property type="entry name" value="RasGEF"/>
    <property type="match status" value="1"/>
</dbReference>
<dbReference type="SUPFAM" id="SSF50729">
    <property type="entry name" value="PH domain-like"/>
    <property type="match status" value="1"/>
</dbReference>
<dbReference type="SUPFAM" id="SSF48366">
    <property type="entry name" value="Ras GEF"/>
    <property type="match status" value="1"/>
</dbReference>
<dbReference type="PROSITE" id="PS50003">
    <property type="entry name" value="PH_DOMAIN"/>
    <property type="match status" value="1"/>
</dbReference>
<dbReference type="PROSITE" id="PS50009">
    <property type="entry name" value="RASGEF_CAT"/>
    <property type="match status" value="1"/>
</dbReference>
<reference key="1">
    <citation type="journal article" date="2003" name="DNA Res.">
        <title>Prediction of the coding sequences of mouse homologues of KIAA gene: III. The complete nucleotide sequences of 500 mouse KIAA-homologous cDNAs identified by screening of terminal sequences of cDNA clones randomly sampled from size-fractionated libraries.</title>
        <authorList>
            <person name="Okazaki N."/>
            <person name="Kikuno R."/>
            <person name="Ohara R."/>
            <person name="Inamoto S."/>
            <person name="Koseki H."/>
            <person name="Hiraoka S."/>
            <person name="Saga Y."/>
            <person name="Nagase T."/>
            <person name="Ohara O."/>
            <person name="Koga H."/>
        </authorList>
    </citation>
    <scope>NUCLEOTIDE SEQUENCE [LARGE SCALE MRNA] (ISOFORM 2)</scope>
</reference>
<reference key="2">
    <citation type="journal article" date="2005" name="Science">
        <title>The transcriptional landscape of the mammalian genome.</title>
        <authorList>
            <person name="Carninci P."/>
            <person name="Kasukawa T."/>
            <person name="Katayama S."/>
            <person name="Gough J."/>
            <person name="Frith M.C."/>
            <person name="Maeda N."/>
            <person name="Oyama R."/>
            <person name="Ravasi T."/>
            <person name="Lenhard B."/>
            <person name="Wells C."/>
            <person name="Kodzius R."/>
            <person name="Shimokawa K."/>
            <person name="Bajic V.B."/>
            <person name="Brenner S.E."/>
            <person name="Batalov S."/>
            <person name="Forrest A.R."/>
            <person name="Zavolan M."/>
            <person name="Davis M.J."/>
            <person name="Wilming L.G."/>
            <person name="Aidinis V."/>
            <person name="Allen J.E."/>
            <person name="Ambesi-Impiombato A."/>
            <person name="Apweiler R."/>
            <person name="Aturaliya R.N."/>
            <person name="Bailey T.L."/>
            <person name="Bansal M."/>
            <person name="Baxter L."/>
            <person name="Beisel K.W."/>
            <person name="Bersano T."/>
            <person name="Bono H."/>
            <person name="Chalk A.M."/>
            <person name="Chiu K.P."/>
            <person name="Choudhary V."/>
            <person name="Christoffels A."/>
            <person name="Clutterbuck D.R."/>
            <person name="Crowe M.L."/>
            <person name="Dalla E."/>
            <person name="Dalrymple B.P."/>
            <person name="de Bono B."/>
            <person name="Della Gatta G."/>
            <person name="di Bernardo D."/>
            <person name="Down T."/>
            <person name="Engstrom P."/>
            <person name="Fagiolini M."/>
            <person name="Faulkner G."/>
            <person name="Fletcher C.F."/>
            <person name="Fukushima T."/>
            <person name="Furuno M."/>
            <person name="Futaki S."/>
            <person name="Gariboldi M."/>
            <person name="Georgii-Hemming P."/>
            <person name="Gingeras T.R."/>
            <person name="Gojobori T."/>
            <person name="Green R.E."/>
            <person name="Gustincich S."/>
            <person name="Harbers M."/>
            <person name="Hayashi Y."/>
            <person name="Hensch T.K."/>
            <person name="Hirokawa N."/>
            <person name="Hill D."/>
            <person name="Huminiecki L."/>
            <person name="Iacono M."/>
            <person name="Ikeo K."/>
            <person name="Iwama A."/>
            <person name="Ishikawa T."/>
            <person name="Jakt M."/>
            <person name="Kanapin A."/>
            <person name="Katoh M."/>
            <person name="Kawasawa Y."/>
            <person name="Kelso J."/>
            <person name="Kitamura H."/>
            <person name="Kitano H."/>
            <person name="Kollias G."/>
            <person name="Krishnan S.P."/>
            <person name="Kruger A."/>
            <person name="Kummerfeld S.K."/>
            <person name="Kurochkin I.V."/>
            <person name="Lareau L.F."/>
            <person name="Lazarevic D."/>
            <person name="Lipovich L."/>
            <person name="Liu J."/>
            <person name="Liuni S."/>
            <person name="McWilliam S."/>
            <person name="Madan Babu M."/>
            <person name="Madera M."/>
            <person name="Marchionni L."/>
            <person name="Matsuda H."/>
            <person name="Matsuzawa S."/>
            <person name="Miki H."/>
            <person name="Mignone F."/>
            <person name="Miyake S."/>
            <person name="Morris K."/>
            <person name="Mottagui-Tabar S."/>
            <person name="Mulder N."/>
            <person name="Nakano N."/>
            <person name="Nakauchi H."/>
            <person name="Ng P."/>
            <person name="Nilsson R."/>
            <person name="Nishiguchi S."/>
            <person name="Nishikawa S."/>
            <person name="Nori F."/>
            <person name="Ohara O."/>
            <person name="Okazaki Y."/>
            <person name="Orlando V."/>
            <person name="Pang K.C."/>
            <person name="Pavan W.J."/>
            <person name="Pavesi G."/>
            <person name="Pesole G."/>
            <person name="Petrovsky N."/>
            <person name="Piazza S."/>
            <person name="Reed J."/>
            <person name="Reid J.F."/>
            <person name="Ring B.Z."/>
            <person name="Ringwald M."/>
            <person name="Rost B."/>
            <person name="Ruan Y."/>
            <person name="Salzberg S.L."/>
            <person name="Sandelin A."/>
            <person name="Schneider C."/>
            <person name="Schoenbach C."/>
            <person name="Sekiguchi K."/>
            <person name="Semple C.A."/>
            <person name="Seno S."/>
            <person name="Sessa L."/>
            <person name="Sheng Y."/>
            <person name="Shibata Y."/>
            <person name="Shimada H."/>
            <person name="Shimada K."/>
            <person name="Silva D."/>
            <person name="Sinclair B."/>
            <person name="Sperling S."/>
            <person name="Stupka E."/>
            <person name="Sugiura K."/>
            <person name="Sultana R."/>
            <person name="Takenaka Y."/>
            <person name="Taki K."/>
            <person name="Tammoja K."/>
            <person name="Tan S.L."/>
            <person name="Tang S."/>
            <person name="Taylor M.S."/>
            <person name="Tegner J."/>
            <person name="Teichmann S.A."/>
            <person name="Ueda H.R."/>
            <person name="van Nimwegen E."/>
            <person name="Verardo R."/>
            <person name="Wei C.L."/>
            <person name="Yagi K."/>
            <person name="Yamanishi H."/>
            <person name="Zabarovsky E."/>
            <person name="Zhu S."/>
            <person name="Zimmer A."/>
            <person name="Hide W."/>
            <person name="Bult C."/>
            <person name="Grimmond S.M."/>
            <person name="Teasdale R.D."/>
            <person name="Liu E.T."/>
            <person name="Brusic V."/>
            <person name="Quackenbush J."/>
            <person name="Wahlestedt C."/>
            <person name="Mattick J.S."/>
            <person name="Hume D.A."/>
            <person name="Kai C."/>
            <person name="Sasaki D."/>
            <person name="Tomaru Y."/>
            <person name="Fukuda S."/>
            <person name="Kanamori-Katayama M."/>
            <person name="Suzuki M."/>
            <person name="Aoki J."/>
            <person name="Arakawa T."/>
            <person name="Iida J."/>
            <person name="Imamura K."/>
            <person name="Itoh M."/>
            <person name="Kato T."/>
            <person name="Kawaji H."/>
            <person name="Kawagashira N."/>
            <person name="Kawashima T."/>
            <person name="Kojima M."/>
            <person name="Kondo S."/>
            <person name="Konno H."/>
            <person name="Nakano K."/>
            <person name="Ninomiya N."/>
            <person name="Nishio T."/>
            <person name="Okada M."/>
            <person name="Plessy C."/>
            <person name="Shibata K."/>
            <person name="Shiraki T."/>
            <person name="Suzuki S."/>
            <person name="Tagami M."/>
            <person name="Waki K."/>
            <person name="Watahiki A."/>
            <person name="Okamura-Oho Y."/>
            <person name="Suzuki H."/>
            <person name="Kawai J."/>
            <person name="Hayashizaki Y."/>
        </authorList>
    </citation>
    <scope>NUCLEOTIDE SEQUENCE [LARGE SCALE MRNA] (ISOFORMS 1 AND 4)</scope>
    <source>
        <strain>C57BL/6J</strain>
        <tissue>Testis</tissue>
        <tissue>Thymus</tissue>
    </source>
</reference>
<reference key="3">
    <citation type="journal article" date="2009" name="PLoS Biol.">
        <title>Lineage-specific biology revealed by a finished genome assembly of the mouse.</title>
        <authorList>
            <person name="Church D.M."/>
            <person name="Goodstadt L."/>
            <person name="Hillier L.W."/>
            <person name="Zody M.C."/>
            <person name="Goldstein S."/>
            <person name="She X."/>
            <person name="Bult C.J."/>
            <person name="Agarwala R."/>
            <person name="Cherry J.L."/>
            <person name="DiCuccio M."/>
            <person name="Hlavina W."/>
            <person name="Kapustin Y."/>
            <person name="Meric P."/>
            <person name="Maglott D."/>
            <person name="Birtle Z."/>
            <person name="Marques A.C."/>
            <person name="Graves T."/>
            <person name="Zhou S."/>
            <person name="Teague B."/>
            <person name="Potamousis K."/>
            <person name="Churas C."/>
            <person name="Place M."/>
            <person name="Herschleb J."/>
            <person name="Runnheim R."/>
            <person name="Forrest D."/>
            <person name="Amos-Landgraf J."/>
            <person name="Schwartz D.C."/>
            <person name="Cheng Z."/>
            <person name="Lindblad-Toh K."/>
            <person name="Eichler E.E."/>
            <person name="Ponting C.P."/>
        </authorList>
    </citation>
    <scope>NUCLEOTIDE SEQUENCE [LARGE SCALE GENOMIC DNA]</scope>
    <source>
        <strain>C57BL/6J</strain>
    </source>
</reference>
<reference key="4">
    <citation type="journal article" date="2004" name="Genome Res.">
        <title>The status, quality, and expansion of the NIH full-length cDNA project: the Mammalian Gene Collection (MGC).</title>
        <authorList>
            <consortium name="The MGC Project Team"/>
        </authorList>
    </citation>
    <scope>NUCLEOTIDE SEQUENCE [LARGE SCALE MRNA] (ISOFORM 3)</scope>
    <source>
        <strain>C57BL/6J</strain>
        <tissue>Brain</tissue>
    </source>
</reference>
<reference key="5">
    <citation type="journal article" date="2010" name="Cell">
        <title>A tissue-specific atlas of mouse protein phosphorylation and expression.</title>
        <authorList>
            <person name="Huttlin E.L."/>
            <person name="Jedrychowski M.P."/>
            <person name="Elias J.E."/>
            <person name="Goswami T."/>
            <person name="Rad R."/>
            <person name="Beausoleil S.A."/>
            <person name="Villen J."/>
            <person name="Haas W."/>
            <person name="Sowa M.E."/>
            <person name="Gygi S.P."/>
        </authorList>
    </citation>
    <scope>IDENTIFICATION BY MASS SPECTROMETRY [LARGE SCALE ANALYSIS]</scope>
    <source>
        <tissue>Brain</tissue>
    </source>
</reference>
<accession>A2AR50</accession>
<accession>A2AR51</accession>
<accession>A2AR52</accession>
<accession>Q6GQS4</accession>
<accession>Q6ZQD2</accession>
<accession>Q8BVR9</accession>
<accession>Q8C1I2</accession>
<name>RGPS1_MOUSE</name>